<accession>Q75EW9</accession>
<reference key="1">
    <citation type="journal article" date="2004" name="Science">
        <title>The Ashbya gossypii genome as a tool for mapping the ancient Saccharomyces cerevisiae genome.</title>
        <authorList>
            <person name="Dietrich F.S."/>
            <person name="Voegeli S."/>
            <person name="Brachat S."/>
            <person name="Lerch A."/>
            <person name="Gates K."/>
            <person name="Steiner S."/>
            <person name="Mohr C."/>
            <person name="Poehlmann R."/>
            <person name="Luedi P."/>
            <person name="Choi S."/>
            <person name="Wing R.A."/>
            <person name="Flavier A."/>
            <person name="Gaffney T.D."/>
            <person name="Philippsen P."/>
        </authorList>
    </citation>
    <scope>NUCLEOTIDE SEQUENCE [LARGE SCALE GENOMIC DNA]</scope>
    <source>
        <strain>ATCC 10895 / CBS 109.51 / FGSC 9923 / NRRL Y-1056</strain>
    </source>
</reference>
<reference key="2">
    <citation type="journal article" date="2013" name="G3 (Bethesda)">
        <title>Genomes of Ashbya fungi isolated from insects reveal four mating-type loci, numerous translocations, lack of transposons, and distinct gene duplications.</title>
        <authorList>
            <person name="Dietrich F.S."/>
            <person name="Voegeli S."/>
            <person name="Kuo S."/>
            <person name="Philippsen P."/>
        </authorList>
    </citation>
    <scope>GENOME REANNOTATION</scope>
    <scope>SEQUENCE REVISION TO 201-203; 210; 223; 225; 241 AND 266</scope>
    <source>
        <strain>ATCC 10895 / CBS 109.51 / FGSC 9923 / NRRL Y-1056</strain>
    </source>
</reference>
<dbReference type="EC" id="3.6.4.13" evidence="1"/>
<dbReference type="EMBL" id="AE016814">
    <property type="protein sequence ID" value="AAS50325.2"/>
    <property type="molecule type" value="Genomic_DNA"/>
</dbReference>
<dbReference type="RefSeq" id="NP_982501.2">
    <property type="nucleotide sequence ID" value="NM_207854.2"/>
</dbReference>
<dbReference type="SMR" id="Q75EW9"/>
<dbReference type="FunCoup" id="Q75EW9">
    <property type="interactions" value="1204"/>
</dbReference>
<dbReference type="STRING" id="284811.Q75EW9"/>
<dbReference type="EnsemblFungi" id="AAS50325">
    <property type="protein sequence ID" value="AAS50325"/>
    <property type="gene ID" value="AGOS_AAL041C"/>
</dbReference>
<dbReference type="GeneID" id="4618601"/>
<dbReference type="KEGG" id="ago:AGOS_AAL041C"/>
<dbReference type="eggNOG" id="KOG0330">
    <property type="taxonomic scope" value="Eukaryota"/>
</dbReference>
<dbReference type="HOGENOM" id="CLU_003041_1_1_1"/>
<dbReference type="InParanoid" id="Q75EW9"/>
<dbReference type="OMA" id="GIGIKCC"/>
<dbReference type="OrthoDB" id="10261904at2759"/>
<dbReference type="Proteomes" id="UP000000591">
    <property type="component" value="Chromosome I"/>
</dbReference>
<dbReference type="GO" id="GO:0005730">
    <property type="term" value="C:nucleolus"/>
    <property type="evidence" value="ECO:0007669"/>
    <property type="project" value="EnsemblFungi"/>
</dbReference>
<dbReference type="GO" id="GO:0005634">
    <property type="term" value="C:nucleus"/>
    <property type="evidence" value="ECO:0000318"/>
    <property type="project" value="GO_Central"/>
</dbReference>
<dbReference type="GO" id="GO:0032040">
    <property type="term" value="C:small-subunit processome"/>
    <property type="evidence" value="ECO:0007669"/>
    <property type="project" value="EnsemblFungi"/>
</dbReference>
<dbReference type="GO" id="GO:0005524">
    <property type="term" value="F:ATP binding"/>
    <property type="evidence" value="ECO:0007669"/>
    <property type="project" value="UniProtKB-KW"/>
</dbReference>
<dbReference type="GO" id="GO:0016887">
    <property type="term" value="F:ATP hydrolysis activity"/>
    <property type="evidence" value="ECO:0007669"/>
    <property type="project" value="RHEA"/>
</dbReference>
<dbReference type="GO" id="GO:0003723">
    <property type="term" value="F:RNA binding"/>
    <property type="evidence" value="ECO:0007669"/>
    <property type="project" value="UniProtKB-KW"/>
</dbReference>
<dbReference type="GO" id="GO:0003724">
    <property type="term" value="F:RNA helicase activity"/>
    <property type="evidence" value="ECO:0007669"/>
    <property type="project" value="UniProtKB-EC"/>
</dbReference>
<dbReference type="GO" id="GO:0000462">
    <property type="term" value="P:maturation of SSU-rRNA from tricistronic rRNA transcript (SSU-rRNA, 5.8S rRNA, LSU-rRNA)"/>
    <property type="evidence" value="ECO:0007669"/>
    <property type="project" value="EnsemblFungi"/>
</dbReference>
<dbReference type="GO" id="GO:0006364">
    <property type="term" value="P:rRNA processing"/>
    <property type="evidence" value="ECO:0000318"/>
    <property type="project" value="GO_Central"/>
</dbReference>
<dbReference type="CDD" id="cd17954">
    <property type="entry name" value="DEADc_DDX47"/>
    <property type="match status" value="1"/>
</dbReference>
<dbReference type="CDD" id="cd18787">
    <property type="entry name" value="SF2_C_DEAD"/>
    <property type="match status" value="1"/>
</dbReference>
<dbReference type="FunFam" id="3.40.50.300:FF:000626">
    <property type="entry name" value="probable ATP-dependent RNA helicase DDX47"/>
    <property type="match status" value="1"/>
</dbReference>
<dbReference type="Gene3D" id="3.40.50.300">
    <property type="entry name" value="P-loop containing nucleotide triphosphate hydrolases"/>
    <property type="match status" value="2"/>
</dbReference>
<dbReference type="InterPro" id="IPR044765">
    <property type="entry name" value="DDX47/Rrp3_DEADc"/>
</dbReference>
<dbReference type="InterPro" id="IPR011545">
    <property type="entry name" value="DEAD/DEAH_box_helicase_dom"/>
</dbReference>
<dbReference type="InterPro" id="IPR050079">
    <property type="entry name" value="DEAD_box_RNA_helicase"/>
</dbReference>
<dbReference type="InterPro" id="IPR014001">
    <property type="entry name" value="Helicase_ATP-bd"/>
</dbReference>
<dbReference type="InterPro" id="IPR001650">
    <property type="entry name" value="Helicase_C-like"/>
</dbReference>
<dbReference type="InterPro" id="IPR027417">
    <property type="entry name" value="P-loop_NTPase"/>
</dbReference>
<dbReference type="InterPro" id="IPR000629">
    <property type="entry name" value="RNA-helicase_DEAD-box_CS"/>
</dbReference>
<dbReference type="InterPro" id="IPR014014">
    <property type="entry name" value="RNA_helicase_DEAD_Q_motif"/>
</dbReference>
<dbReference type="PANTHER" id="PTHR47959:SF24">
    <property type="entry name" value="ATP-DEPENDENT RNA HELICASE"/>
    <property type="match status" value="1"/>
</dbReference>
<dbReference type="PANTHER" id="PTHR47959">
    <property type="entry name" value="ATP-DEPENDENT RNA HELICASE RHLE-RELATED"/>
    <property type="match status" value="1"/>
</dbReference>
<dbReference type="Pfam" id="PF00270">
    <property type="entry name" value="DEAD"/>
    <property type="match status" value="1"/>
</dbReference>
<dbReference type="Pfam" id="PF00271">
    <property type="entry name" value="Helicase_C"/>
    <property type="match status" value="1"/>
</dbReference>
<dbReference type="SMART" id="SM00487">
    <property type="entry name" value="DEXDc"/>
    <property type="match status" value="1"/>
</dbReference>
<dbReference type="SMART" id="SM00490">
    <property type="entry name" value="HELICc"/>
    <property type="match status" value="1"/>
</dbReference>
<dbReference type="SUPFAM" id="SSF52540">
    <property type="entry name" value="P-loop containing nucleoside triphosphate hydrolases"/>
    <property type="match status" value="1"/>
</dbReference>
<dbReference type="PROSITE" id="PS00039">
    <property type="entry name" value="DEAD_ATP_HELICASE"/>
    <property type="match status" value="1"/>
</dbReference>
<dbReference type="PROSITE" id="PS51192">
    <property type="entry name" value="HELICASE_ATP_BIND_1"/>
    <property type="match status" value="1"/>
</dbReference>
<dbReference type="PROSITE" id="PS51194">
    <property type="entry name" value="HELICASE_CTER"/>
    <property type="match status" value="1"/>
</dbReference>
<dbReference type="PROSITE" id="PS51195">
    <property type="entry name" value="Q_MOTIF"/>
    <property type="match status" value="1"/>
</dbReference>
<proteinExistence type="inferred from homology"/>
<feature type="chain" id="PRO_0000227959" description="ATP-dependent rRNA helicase RRP3">
    <location>
        <begin position="1"/>
        <end position="486"/>
    </location>
</feature>
<feature type="domain" description="Helicase ATP-binding" evidence="3">
    <location>
        <begin position="97"/>
        <end position="269"/>
    </location>
</feature>
<feature type="domain" description="Helicase C-terminal" evidence="4">
    <location>
        <begin position="300"/>
        <end position="446"/>
    </location>
</feature>
<feature type="region of interest" description="Disordered" evidence="5">
    <location>
        <begin position="1"/>
        <end position="52"/>
    </location>
</feature>
<feature type="region of interest" description="Disordered" evidence="5">
    <location>
        <begin position="459"/>
        <end position="486"/>
    </location>
</feature>
<feature type="coiled-coil region" evidence="2">
    <location>
        <begin position="17"/>
        <end position="49"/>
    </location>
</feature>
<feature type="short sequence motif" description="Q motif" evidence="6">
    <location>
        <begin position="66"/>
        <end position="94"/>
    </location>
</feature>
<feature type="short sequence motif" description="DEAD box" evidence="6">
    <location>
        <begin position="216"/>
        <end position="219"/>
    </location>
</feature>
<feature type="compositionally biased region" description="Basic residues" evidence="5">
    <location>
        <begin position="1"/>
        <end position="11"/>
    </location>
</feature>
<feature type="compositionally biased region" description="Basic and acidic residues" evidence="5">
    <location>
        <begin position="21"/>
        <end position="38"/>
    </location>
</feature>
<feature type="compositionally biased region" description="Low complexity" evidence="5">
    <location>
        <begin position="41"/>
        <end position="52"/>
    </location>
</feature>
<feature type="compositionally biased region" description="Basic and acidic residues" evidence="5">
    <location>
        <begin position="476"/>
        <end position="486"/>
    </location>
</feature>
<feature type="binding site" evidence="3">
    <location>
        <begin position="110"/>
        <end position="117"/>
    </location>
    <ligand>
        <name>ATP</name>
        <dbReference type="ChEBI" id="CHEBI:30616"/>
    </ligand>
</feature>
<gene>
    <name evidence="1" type="primary">RRP3</name>
    <name type="ordered locus">AAL041C</name>
</gene>
<sequence length="486" mass="53991">MSKVTKQSKSHKSSELVSLAEKIKQKALENRKQSREESQATEEANTASETEAAVIEETAEPEEGFSSFRELDLVPELIEACDNLNFTKPTPIQSKAIPPALQGKDIIGLAQTGSGKTAAFAIPILNRLWHDQQPYYACILAPTRELAQQIKETFDSLGSLMGVRTTCIVGGMNMMDQARDLMRKPHIIIATPGRLMDHLENTKGFALRKLQFLVMDEADRLLDMEFGPVLDRILKNIPTKGRTTYLFSATMTSKIDKLQRASLTNPVKCAVSNKYQTVDTLVQTLIVVPGGLKNTFLIYLLNEFIGKTTIVFTRTKANAERISGLCNLLEFSATALHGDLNQNQRTGALDLFKAGKKSILVATDVAARGLDIPSVDLVINYDIPVDSKSYIHRVGRTARAGRSGKSVSLVSQYDLELILRIEEVLGKKLPKENVDKSIVLSLRDSVDKANGEVIMELNRRNKEKQTRGKGRRSRTATRENMDKEEE</sequence>
<evidence type="ECO:0000250" key="1">
    <source>
        <dbReference type="UniProtKB" id="P38712"/>
    </source>
</evidence>
<evidence type="ECO:0000255" key="2"/>
<evidence type="ECO:0000255" key="3">
    <source>
        <dbReference type="PROSITE-ProRule" id="PRU00541"/>
    </source>
</evidence>
<evidence type="ECO:0000255" key="4">
    <source>
        <dbReference type="PROSITE-ProRule" id="PRU00542"/>
    </source>
</evidence>
<evidence type="ECO:0000256" key="5">
    <source>
        <dbReference type="SAM" id="MobiDB-lite"/>
    </source>
</evidence>
<evidence type="ECO:0000305" key="6"/>
<protein>
    <recommendedName>
        <fullName evidence="6">ATP-dependent rRNA helicase RRP3</fullName>
        <ecNumber evidence="1">3.6.4.13</ecNumber>
    </recommendedName>
</protein>
<keyword id="KW-0067">ATP-binding</keyword>
<keyword id="KW-0175">Coiled coil</keyword>
<keyword id="KW-0347">Helicase</keyword>
<keyword id="KW-0378">Hydrolase</keyword>
<keyword id="KW-0547">Nucleotide-binding</keyword>
<keyword id="KW-0539">Nucleus</keyword>
<keyword id="KW-1185">Reference proteome</keyword>
<keyword id="KW-0690">Ribosome biogenesis</keyword>
<keyword id="KW-0694">RNA-binding</keyword>
<keyword id="KW-0698">rRNA processing</keyword>
<comment type="function">
    <text evidence="1">ATP-dependent rRNA helicase required for pre-ribosomal RNA processing. Involved in the maturation of the 35S-pre-rRNA and to its cleavage to mature 18S rRNA.</text>
</comment>
<comment type="catalytic activity">
    <reaction evidence="1">
        <text>ATP + H2O = ADP + phosphate + H(+)</text>
        <dbReference type="Rhea" id="RHEA:13065"/>
        <dbReference type="ChEBI" id="CHEBI:15377"/>
        <dbReference type="ChEBI" id="CHEBI:15378"/>
        <dbReference type="ChEBI" id="CHEBI:30616"/>
        <dbReference type="ChEBI" id="CHEBI:43474"/>
        <dbReference type="ChEBI" id="CHEBI:456216"/>
        <dbReference type="EC" id="3.6.4.13"/>
    </reaction>
</comment>
<comment type="subunit">
    <text evidence="1">Interacts with the SSU processome.</text>
</comment>
<comment type="subcellular location">
    <subcellularLocation>
        <location evidence="6">Nucleus</location>
    </subcellularLocation>
</comment>
<comment type="domain">
    <text evidence="6">The Q motif is unique to and characteristic of the DEAD box family of RNA helicases and controls ATP binding and hydrolysis.</text>
</comment>
<comment type="similarity">
    <text evidence="6">Belongs to the DEAD box helicase family. DDX47/RRP3 subfamily.</text>
</comment>
<name>RRP3_EREGS</name>
<organism>
    <name type="scientific">Eremothecium gossypii (strain ATCC 10895 / CBS 109.51 / FGSC 9923 / NRRL Y-1056)</name>
    <name type="common">Yeast</name>
    <name type="synonym">Ashbya gossypii</name>
    <dbReference type="NCBI Taxonomy" id="284811"/>
    <lineage>
        <taxon>Eukaryota</taxon>
        <taxon>Fungi</taxon>
        <taxon>Dikarya</taxon>
        <taxon>Ascomycota</taxon>
        <taxon>Saccharomycotina</taxon>
        <taxon>Saccharomycetes</taxon>
        <taxon>Saccharomycetales</taxon>
        <taxon>Saccharomycetaceae</taxon>
        <taxon>Eremothecium</taxon>
    </lineage>
</organism>